<gene>
    <name type="primary">cho2</name>
    <name type="ORF">AFLA_014850</name>
</gene>
<proteinExistence type="inferred from homology"/>
<keyword id="KW-0256">Endoplasmic reticulum</keyword>
<keyword id="KW-0444">Lipid biosynthesis</keyword>
<keyword id="KW-0443">Lipid metabolism</keyword>
<keyword id="KW-0472">Membrane</keyword>
<keyword id="KW-0489">Methyltransferase</keyword>
<keyword id="KW-0594">Phospholipid biosynthesis</keyword>
<keyword id="KW-1208">Phospholipid metabolism</keyword>
<keyword id="KW-0949">S-adenosyl-L-methionine</keyword>
<keyword id="KW-0808">Transferase</keyword>
<keyword id="KW-0812">Transmembrane</keyword>
<keyword id="KW-1133">Transmembrane helix</keyword>
<reference key="1">
    <citation type="journal article" date="2015" name="Genome Announc.">
        <title>Genome sequence of Aspergillus flavus NRRL 3357, a strain that causes aflatoxin contamination of food and feed.</title>
        <authorList>
            <person name="Nierman W.C."/>
            <person name="Yu J."/>
            <person name="Fedorova-Abrams N.D."/>
            <person name="Losada L."/>
            <person name="Cleveland T.E."/>
            <person name="Bhatnagar D."/>
            <person name="Bennett J.W."/>
            <person name="Dean R."/>
            <person name="Payne G.A."/>
        </authorList>
    </citation>
    <scope>NUCLEOTIDE SEQUENCE [LARGE SCALE GENOMIC DNA]</scope>
    <source>
        <strain>ATCC 200026 / FGSC A1120 / IAM 13836 / NRRL 3357 / JCM 12722 / SRRC 167</strain>
    </source>
</reference>
<feature type="chain" id="PRO_0000405874" description="Phosphatidylethanolamine N-methyltransferase">
    <location>
        <begin position="1"/>
        <end position="971"/>
    </location>
</feature>
<feature type="topological domain" description="Lumenal" evidence="1">
    <location>
        <begin position="1"/>
        <end position="85"/>
    </location>
</feature>
<feature type="transmembrane region" description="Helical" evidence="1">
    <location>
        <begin position="86"/>
        <end position="106"/>
    </location>
</feature>
<feature type="topological domain" description="Cytoplasmic" evidence="1">
    <location>
        <begin position="107"/>
        <end position="109"/>
    </location>
</feature>
<feature type="transmembrane region" description="Helical" evidence="1">
    <location>
        <begin position="110"/>
        <end position="130"/>
    </location>
</feature>
<feature type="topological domain" description="Lumenal" evidence="1">
    <location>
        <begin position="131"/>
        <end position="195"/>
    </location>
</feature>
<feature type="transmembrane region" description="Helical" evidence="1">
    <location>
        <begin position="196"/>
        <end position="216"/>
    </location>
</feature>
<feature type="topological domain" description="Cytoplasmic" evidence="1">
    <location>
        <begin position="217"/>
        <end position="223"/>
    </location>
</feature>
<feature type="transmembrane region" description="Helical" evidence="1">
    <location>
        <begin position="224"/>
        <end position="244"/>
    </location>
</feature>
<feature type="topological domain" description="Lumenal" evidence="1">
    <location>
        <begin position="245"/>
        <end position="277"/>
    </location>
</feature>
<feature type="transmembrane region" description="Helical" evidence="1">
    <location>
        <begin position="278"/>
        <end position="298"/>
    </location>
</feature>
<feature type="topological domain" description="Cytoplasmic" evidence="1">
    <location>
        <begin position="299"/>
        <end position="300"/>
    </location>
</feature>
<feature type="transmembrane region" description="Helical" evidence="1">
    <location>
        <begin position="301"/>
        <end position="321"/>
    </location>
</feature>
<feature type="topological domain" description="Lumenal" evidence="1">
    <location>
        <begin position="322"/>
        <end position="389"/>
    </location>
</feature>
<feature type="transmembrane region" description="Helical" evidence="1">
    <location>
        <begin position="390"/>
        <end position="411"/>
    </location>
</feature>
<feature type="topological domain" description="Cytoplasmic" evidence="1">
    <location>
        <begin position="412"/>
        <end position="417"/>
    </location>
</feature>
<feature type="transmembrane region" description="Helical" evidence="1">
    <location>
        <begin position="418"/>
        <end position="441"/>
    </location>
</feature>
<feature type="topological domain" description="Lumenal" evidence="1">
    <location>
        <begin position="442"/>
        <end position="473"/>
    </location>
</feature>
<feature type="transmembrane region" description="Helical" evidence="1">
    <location>
        <begin position="474"/>
        <end position="494"/>
    </location>
</feature>
<feature type="topological domain" description="Cytoplasmic" evidence="1">
    <location>
        <begin position="495"/>
        <end position="496"/>
    </location>
</feature>
<feature type="transmembrane region" description="Helical" evidence="1">
    <location>
        <begin position="497"/>
        <end position="517"/>
    </location>
</feature>
<feature type="topological domain" description="Lumenal" evidence="1">
    <location>
        <begin position="518"/>
        <end position="575"/>
    </location>
</feature>
<feature type="transmembrane region" description="Helical" evidence="1">
    <location>
        <begin position="576"/>
        <end position="596"/>
    </location>
</feature>
<feature type="topological domain" description="Cytoplasmic" evidence="1">
    <location>
        <begin position="597"/>
        <end position="971"/>
    </location>
</feature>
<feature type="region of interest" description="Disordered" evidence="2">
    <location>
        <begin position="1"/>
        <end position="30"/>
    </location>
</feature>
<feature type="region of interest" description="Disordered" evidence="2">
    <location>
        <begin position="330"/>
        <end position="359"/>
    </location>
</feature>
<feature type="region of interest" description="Disordered" evidence="2">
    <location>
        <begin position="699"/>
        <end position="723"/>
    </location>
</feature>
<feature type="compositionally biased region" description="Basic and acidic residues" evidence="2">
    <location>
        <begin position="10"/>
        <end position="20"/>
    </location>
</feature>
<feature type="compositionally biased region" description="Polar residues" evidence="2">
    <location>
        <begin position="21"/>
        <end position="30"/>
    </location>
</feature>
<feature type="compositionally biased region" description="Polar residues" evidence="2">
    <location>
        <begin position="342"/>
        <end position="352"/>
    </location>
</feature>
<name>CHO2_ASPFN</name>
<organism>
    <name type="scientific">Aspergillus flavus (strain ATCC 200026 / FGSC A1120 / IAM 13836 / NRRL 3357 / JCM 12722 / SRRC 167)</name>
    <dbReference type="NCBI Taxonomy" id="332952"/>
    <lineage>
        <taxon>Eukaryota</taxon>
        <taxon>Fungi</taxon>
        <taxon>Dikarya</taxon>
        <taxon>Ascomycota</taxon>
        <taxon>Pezizomycotina</taxon>
        <taxon>Eurotiomycetes</taxon>
        <taxon>Eurotiomycetidae</taxon>
        <taxon>Eurotiales</taxon>
        <taxon>Aspergillaceae</taxon>
        <taxon>Aspergillus</taxon>
        <taxon>Aspergillus subgen. Circumdati</taxon>
    </lineage>
</organism>
<sequence length="971" mass="109686">MDRGLSTSTRIDDEGLRERNVASQSTSTLSPEALTATGDVELKDKTGKDCKTFGRTPDGTVFTVPQTHDMVSQLLSPSEPKNLSDVIVLAILGAHILLLWQLPTGAKVPVFAIIYLFWRAAYNAGIGWLLHNQSHHKTLVRWAEKTKVFVNPATGKNPHPNVYNFFKRELETKIPHDYSFDEAPIEYNTWLVFRRLVDLILMCDFVSYCLFAIACSHHPVNESVLMTVLRWSAGIVLVLFNLWVKLDAHRVVKDFAWYWGDFFYLIDQELTFDGVFEMAPHPMYSVGYAGYYGISLMAASYKVLFISIIAHAAQFAFLVLVENPHIDKTYNPPPSRKRSAEQETGSVSSRTADSPIAPTPIDEQIPHAPTFSSSPPQSVHELLGLHNLDLYRITDTSSVLIQFLVFALTVLTPSTPWYQFLFVANAAVWRLWFSIGVGYMLHRQSNHKAWTRHFVKYGETPQEAWNQWKGTYHLSMIMCYASFIAAVWKMYNFPADWGYGLVLLRHVLGAGLISLQIWTSVSIYESLGEFGWFYGDFFFDGSSKLTYNGIYRFLNNPERVLGLAGVWGAVLITSSGAITFLALLSHILSLAFIQFIERPHMQKLYGQSLRQDAGLVKSLKKSLPPTLRQLHGSVDKIFDESFEFIEEIIETARPKLANGVNTFVKDTTALFQSYPARVTISRIDEDLAGYDSRDYSLEVEGTDSSSLAEHDQSTGREGANARMPLDRRGDLKNLVFEYGAPIRVKWTAPLNHSKKDWIGLYKVTDNTSREVTRVSSQGRWIAVNEGAYDNLTCEKGIVKSDVVIKATQQQDGDKRDLATGEVIFSGDKLFWTQGVFEFRYHHNAKHNVMAISRPFEIRIGRYEEEDDHELTQASVEKSLLPVIRSCFDRDPEIAPEAVDEPFGSLVERDGKFAKRVVFAVHQMFGVEFAPGVVQADGTVRNLAWRVCNAKRVLAPYSMSRNGASTPTERKE</sequence>
<accession>B8N6H2</accession>
<dbReference type="EC" id="2.1.1.17" evidence="1"/>
<dbReference type="EMBL" id="EQ963474">
    <property type="protein sequence ID" value="EED54233.1"/>
    <property type="molecule type" value="Genomic_DNA"/>
</dbReference>
<dbReference type="RefSeq" id="XP_002375505.1">
    <property type="nucleotide sequence ID" value="XM_002375464.1"/>
</dbReference>
<dbReference type="SMR" id="B8N6H2"/>
<dbReference type="STRING" id="332952.B8N6H2"/>
<dbReference type="EnsemblFungi" id="EED54233">
    <property type="protein sequence ID" value="EED54233"/>
    <property type="gene ID" value="AFLA_014850"/>
</dbReference>
<dbReference type="VEuPathDB" id="FungiDB:AFLA_001923"/>
<dbReference type="eggNOG" id="ENOG502QRGH">
    <property type="taxonomic scope" value="Eukaryota"/>
</dbReference>
<dbReference type="HOGENOM" id="CLU_005987_0_0_1"/>
<dbReference type="OMA" id="RIWYSVG"/>
<dbReference type="UniPathway" id="UPA00753"/>
<dbReference type="GO" id="GO:0032541">
    <property type="term" value="C:cortical endoplasmic reticulum"/>
    <property type="evidence" value="ECO:0007669"/>
    <property type="project" value="EnsemblFungi"/>
</dbReference>
<dbReference type="GO" id="GO:0005789">
    <property type="term" value="C:endoplasmic reticulum membrane"/>
    <property type="evidence" value="ECO:0007669"/>
    <property type="project" value="UniProtKB-SubCell"/>
</dbReference>
<dbReference type="GO" id="GO:0097038">
    <property type="term" value="C:perinuclear endoplasmic reticulum"/>
    <property type="evidence" value="ECO:0007669"/>
    <property type="project" value="EnsemblFungi"/>
</dbReference>
<dbReference type="GO" id="GO:0004608">
    <property type="term" value="F:phosphatidylethanolamine N-methyltransferase activity"/>
    <property type="evidence" value="ECO:0007669"/>
    <property type="project" value="UniProtKB-UniRule"/>
</dbReference>
<dbReference type="GO" id="GO:0032259">
    <property type="term" value="P:methylation"/>
    <property type="evidence" value="ECO:0007669"/>
    <property type="project" value="UniProtKB-KW"/>
</dbReference>
<dbReference type="GO" id="GO:0006656">
    <property type="term" value="P:phosphatidylcholine biosynthetic process"/>
    <property type="evidence" value="ECO:0007669"/>
    <property type="project" value="UniProtKB-UniRule"/>
</dbReference>
<dbReference type="FunFam" id="2.60.40.2840:FF:000006">
    <property type="entry name" value="Phosphatidylethanolamine N-methyltransferase"/>
    <property type="match status" value="1"/>
</dbReference>
<dbReference type="Gene3D" id="2.60.40.2840">
    <property type="match status" value="1"/>
</dbReference>
<dbReference type="HAMAP" id="MF_03217">
    <property type="entry name" value="PEMT"/>
    <property type="match status" value="1"/>
</dbReference>
<dbReference type="InterPro" id="IPR007318">
    <property type="entry name" value="Phopholipid_MeTrfase"/>
</dbReference>
<dbReference type="InterPro" id="IPR016219">
    <property type="entry name" value="Phosphatid-EA_MeTrfase_fun"/>
</dbReference>
<dbReference type="PANTHER" id="PTHR32138">
    <property type="entry name" value="PHOSPHATIDYLETHANOLAMINE N-METHYLTRANSFERASE"/>
    <property type="match status" value="1"/>
</dbReference>
<dbReference type="PANTHER" id="PTHR32138:SF0">
    <property type="entry name" value="PHOSPHATIDYLETHANOLAMINE N-METHYLTRANSFERASE"/>
    <property type="match status" value="1"/>
</dbReference>
<dbReference type="Pfam" id="PF04191">
    <property type="entry name" value="PEMT"/>
    <property type="match status" value="2"/>
</dbReference>
<dbReference type="PIRSF" id="PIRSF000383">
    <property type="entry name" value="PEAMT"/>
    <property type="match status" value="1"/>
</dbReference>
<dbReference type="PROSITE" id="PS51598">
    <property type="entry name" value="SAM_CHO2"/>
    <property type="match status" value="1"/>
</dbReference>
<evidence type="ECO:0000255" key="1">
    <source>
        <dbReference type="HAMAP-Rule" id="MF_03217"/>
    </source>
</evidence>
<evidence type="ECO:0000256" key="2">
    <source>
        <dbReference type="SAM" id="MobiDB-lite"/>
    </source>
</evidence>
<protein>
    <recommendedName>
        <fullName evidence="1">Phosphatidylethanolamine N-methyltransferase</fullName>
        <shortName evidence="1">PE methyltransferase</shortName>
        <shortName evidence="1">PEAMT</shortName>
        <shortName evidence="1">PEMT</shortName>
        <ecNumber evidence="1">2.1.1.17</ecNumber>
    </recommendedName>
</protein>
<comment type="function">
    <text evidence="1">Catalyzes the first step of the methylation pathway of phosphatidylcholine biosynthesis, the SAM-dependent methylation of phosphatidylethanolamine (PE) to phosphatidylmonomethylethanolamine (PMME).</text>
</comment>
<comment type="catalytic activity">
    <reaction evidence="1">
        <text>a 1,2-diacyl-sn-glycero-3-phosphoethanolamine + S-adenosyl-L-methionine = a 1,2-diacyl-sn-glycero-3-phospho-N-methylethanolamine + S-adenosyl-L-homocysteine + H(+)</text>
        <dbReference type="Rhea" id="RHEA:11164"/>
        <dbReference type="ChEBI" id="CHEBI:15378"/>
        <dbReference type="ChEBI" id="CHEBI:57856"/>
        <dbReference type="ChEBI" id="CHEBI:59789"/>
        <dbReference type="ChEBI" id="CHEBI:64573"/>
        <dbReference type="ChEBI" id="CHEBI:64612"/>
        <dbReference type="EC" id="2.1.1.17"/>
    </reaction>
</comment>
<comment type="pathway">
    <text evidence="1">Phospholipid metabolism; phosphatidylcholine biosynthesis.</text>
</comment>
<comment type="subcellular location">
    <subcellularLocation>
        <location evidence="1">Endoplasmic reticulum membrane</location>
        <topology evidence="1">Multi-pass membrane protein</topology>
    </subcellularLocation>
</comment>
<comment type="similarity">
    <text evidence="1">Belongs to the class VI-like SAM-binding methyltransferase superfamily. CHO2 family.</text>
</comment>